<name>CYB_HYLAB</name>
<geneLocation type="mitochondrion"/>
<organism>
    <name type="scientific">Hylopetes alboniger</name>
    <name type="common">Particolored flying squirrel</name>
    <dbReference type="NCBI Taxonomy" id="254705"/>
    <lineage>
        <taxon>Eukaryota</taxon>
        <taxon>Metazoa</taxon>
        <taxon>Chordata</taxon>
        <taxon>Craniata</taxon>
        <taxon>Vertebrata</taxon>
        <taxon>Euteleostomi</taxon>
        <taxon>Mammalia</taxon>
        <taxon>Eutheria</taxon>
        <taxon>Euarchontoglires</taxon>
        <taxon>Glires</taxon>
        <taxon>Rodentia</taxon>
        <taxon>Sciuromorpha</taxon>
        <taxon>Sciuridae</taxon>
        <taxon>Sciurinae</taxon>
        <taxon>Pteromyini</taxon>
        <taxon>Hylopetes</taxon>
    </lineage>
</organism>
<proteinExistence type="inferred from homology"/>
<evidence type="ECO:0000250" key="1"/>
<evidence type="ECO:0000250" key="2">
    <source>
        <dbReference type="UniProtKB" id="P00157"/>
    </source>
</evidence>
<evidence type="ECO:0000255" key="3">
    <source>
        <dbReference type="PROSITE-ProRule" id="PRU00967"/>
    </source>
</evidence>
<evidence type="ECO:0000255" key="4">
    <source>
        <dbReference type="PROSITE-ProRule" id="PRU00968"/>
    </source>
</evidence>
<accession>Q104Y3</accession>
<protein>
    <recommendedName>
        <fullName>Cytochrome b</fullName>
    </recommendedName>
    <alternativeName>
        <fullName>Complex III subunit 3</fullName>
    </alternativeName>
    <alternativeName>
        <fullName>Complex III subunit III</fullName>
    </alternativeName>
    <alternativeName>
        <fullName>Cytochrome b-c1 complex subunit 3</fullName>
    </alternativeName>
    <alternativeName>
        <fullName>Ubiquinol-cytochrome-c reductase complex cytochrome b subunit</fullName>
    </alternativeName>
</protein>
<gene>
    <name type="primary">MT-CYB</name>
    <name type="synonym">COB</name>
    <name type="synonym">CYTB</name>
    <name type="synonym">MTCYB</name>
</gene>
<feature type="chain" id="PRO_0000257901" description="Cytochrome b">
    <location>
        <begin position="1"/>
        <end position="379"/>
    </location>
</feature>
<feature type="transmembrane region" description="Helical" evidence="2">
    <location>
        <begin position="33"/>
        <end position="53"/>
    </location>
</feature>
<feature type="transmembrane region" description="Helical" evidence="2">
    <location>
        <begin position="77"/>
        <end position="98"/>
    </location>
</feature>
<feature type="transmembrane region" description="Helical" evidence="2">
    <location>
        <begin position="113"/>
        <end position="133"/>
    </location>
</feature>
<feature type="transmembrane region" description="Helical" evidence="2">
    <location>
        <begin position="178"/>
        <end position="198"/>
    </location>
</feature>
<feature type="transmembrane region" description="Helical" evidence="2">
    <location>
        <begin position="226"/>
        <end position="246"/>
    </location>
</feature>
<feature type="transmembrane region" description="Helical" evidence="2">
    <location>
        <begin position="288"/>
        <end position="308"/>
    </location>
</feature>
<feature type="transmembrane region" description="Helical" evidence="2">
    <location>
        <begin position="320"/>
        <end position="340"/>
    </location>
</feature>
<feature type="transmembrane region" description="Helical" evidence="2">
    <location>
        <begin position="347"/>
        <end position="367"/>
    </location>
</feature>
<feature type="binding site" description="axial binding residue" evidence="2">
    <location>
        <position position="83"/>
    </location>
    <ligand>
        <name>heme b</name>
        <dbReference type="ChEBI" id="CHEBI:60344"/>
        <label>b562</label>
    </ligand>
    <ligandPart>
        <name>Fe</name>
        <dbReference type="ChEBI" id="CHEBI:18248"/>
    </ligandPart>
</feature>
<feature type="binding site" description="axial binding residue" evidence="2">
    <location>
        <position position="97"/>
    </location>
    <ligand>
        <name>heme b</name>
        <dbReference type="ChEBI" id="CHEBI:60344"/>
        <label>b566</label>
    </ligand>
    <ligandPart>
        <name>Fe</name>
        <dbReference type="ChEBI" id="CHEBI:18248"/>
    </ligandPart>
</feature>
<feature type="binding site" description="axial binding residue" evidence="2">
    <location>
        <position position="182"/>
    </location>
    <ligand>
        <name>heme b</name>
        <dbReference type="ChEBI" id="CHEBI:60344"/>
        <label>b562</label>
    </ligand>
    <ligandPart>
        <name>Fe</name>
        <dbReference type="ChEBI" id="CHEBI:18248"/>
    </ligandPart>
</feature>
<feature type="binding site" description="axial binding residue" evidence="2">
    <location>
        <position position="196"/>
    </location>
    <ligand>
        <name>heme b</name>
        <dbReference type="ChEBI" id="CHEBI:60344"/>
        <label>b566</label>
    </ligand>
    <ligandPart>
        <name>Fe</name>
        <dbReference type="ChEBI" id="CHEBI:18248"/>
    </ligandPart>
</feature>
<feature type="binding site" evidence="2">
    <location>
        <position position="201"/>
    </location>
    <ligand>
        <name>a ubiquinone</name>
        <dbReference type="ChEBI" id="CHEBI:16389"/>
    </ligand>
</feature>
<dbReference type="EMBL" id="DQ093187">
    <property type="protein sequence ID" value="AAZ68028.1"/>
    <property type="molecule type" value="Genomic_DNA"/>
</dbReference>
<dbReference type="SMR" id="Q104Y3"/>
<dbReference type="GO" id="GO:0005743">
    <property type="term" value="C:mitochondrial inner membrane"/>
    <property type="evidence" value="ECO:0007669"/>
    <property type="project" value="UniProtKB-SubCell"/>
</dbReference>
<dbReference type="GO" id="GO:0045275">
    <property type="term" value="C:respiratory chain complex III"/>
    <property type="evidence" value="ECO:0007669"/>
    <property type="project" value="InterPro"/>
</dbReference>
<dbReference type="GO" id="GO:0046872">
    <property type="term" value="F:metal ion binding"/>
    <property type="evidence" value="ECO:0007669"/>
    <property type="project" value="UniProtKB-KW"/>
</dbReference>
<dbReference type="GO" id="GO:0008121">
    <property type="term" value="F:ubiquinol-cytochrome-c reductase activity"/>
    <property type="evidence" value="ECO:0007669"/>
    <property type="project" value="InterPro"/>
</dbReference>
<dbReference type="GO" id="GO:0006122">
    <property type="term" value="P:mitochondrial electron transport, ubiquinol to cytochrome c"/>
    <property type="evidence" value="ECO:0007669"/>
    <property type="project" value="TreeGrafter"/>
</dbReference>
<dbReference type="CDD" id="cd00290">
    <property type="entry name" value="cytochrome_b_C"/>
    <property type="match status" value="1"/>
</dbReference>
<dbReference type="CDD" id="cd00284">
    <property type="entry name" value="Cytochrome_b_N"/>
    <property type="match status" value="1"/>
</dbReference>
<dbReference type="FunFam" id="1.20.810.10:FF:000002">
    <property type="entry name" value="Cytochrome b"/>
    <property type="match status" value="1"/>
</dbReference>
<dbReference type="Gene3D" id="1.20.810.10">
    <property type="entry name" value="Cytochrome Bc1 Complex, Chain C"/>
    <property type="match status" value="1"/>
</dbReference>
<dbReference type="InterPro" id="IPR005798">
    <property type="entry name" value="Cyt_b/b6_C"/>
</dbReference>
<dbReference type="InterPro" id="IPR036150">
    <property type="entry name" value="Cyt_b/b6_C_sf"/>
</dbReference>
<dbReference type="InterPro" id="IPR005797">
    <property type="entry name" value="Cyt_b/b6_N"/>
</dbReference>
<dbReference type="InterPro" id="IPR027387">
    <property type="entry name" value="Cytb/b6-like_sf"/>
</dbReference>
<dbReference type="InterPro" id="IPR030689">
    <property type="entry name" value="Cytochrome_b"/>
</dbReference>
<dbReference type="InterPro" id="IPR048260">
    <property type="entry name" value="Cytochrome_b_C_euk/bac"/>
</dbReference>
<dbReference type="InterPro" id="IPR048259">
    <property type="entry name" value="Cytochrome_b_N_euk/bac"/>
</dbReference>
<dbReference type="InterPro" id="IPR016174">
    <property type="entry name" value="Di-haem_cyt_TM"/>
</dbReference>
<dbReference type="PANTHER" id="PTHR19271">
    <property type="entry name" value="CYTOCHROME B"/>
    <property type="match status" value="1"/>
</dbReference>
<dbReference type="PANTHER" id="PTHR19271:SF16">
    <property type="entry name" value="CYTOCHROME B"/>
    <property type="match status" value="1"/>
</dbReference>
<dbReference type="Pfam" id="PF00032">
    <property type="entry name" value="Cytochrom_B_C"/>
    <property type="match status" value="1"/>
</dbReference>
<dbReference type="Pfam" id="PF00033">
    <property type="entry name" value="Cytochrome_B"/>
    <property type="match status" value="1"/>
</dbReference>
<dbReference type="PIRSF" id="PIRSF038885">
    <property type="entry name" value="COB"/>
    <property type="match status" value="1"/>
</dbReference>
<dbReference type="SUPFAM" id="SSF81648">
    <property type="entry name" value="a domain/subunit of cytochrome bc1 complex (Ubiquinol-cytochrome c reductase)"/>
    <property type="match status" value="1"/>
</dbReference>
<dbReference type="SUPFAM" id="SSF81342">
    <property type="entry name" value="Transmembrane di-heme cytochromes"/>
    <property type="match status" value="1"/>
</dbReference>
<dbReference type="PROSITE" id="PS51003">
    <property type="entry name" value="CYTB_CTER"/>
    <property type="match status" value="1"/>
</dbReference>
<dbReference type="PROSITE" id="PS51002">
    <property type="entry name" value="CYTB_NTER"/>
    <property type="match status" value="1"/>
</dbReference>
<sequence length="379" mass="43004">MTNIRKSHPLIKIVNHSFIDLPTPSNISAWWNFGSLLGFCLIIQIVTGLFLAMHYTSDTMTAFSSVTHICRDVNYGWLIRYMHANGASMFFICLFLHIGRGLYYGSYTYFETWNVGVILLFAVMATAFMGYVLPWGQMSFWGATVITNLLSAIPYIGTTLVEWIWGGFSVDKAPLTRFFAFHFVLPFIIAALAMIHLLFLHETGSNNPSGLISDSDKIPFHPYFSIKDLLGALILLLIFMNLVLFTPDLLGDPDNYIPANPLNTPPHIKPEWYFLFAYAILRSIPNKLGGVLALVFSILILMLFPILHMSKQRSMMFRPLSQCFFWILVADLFTLTWIGGQPVEYPFIAIGQVASILYFTIILIILPSISLLENKLLKW</sequence>
<comment type="function">
    <text evidence="2">Component of the ubiquinol-cytochrome c reductase complex (complex III or cytochrome b-c1 complex) that is part of the mitochondrial respiratory chain. The b-c1 complex mediates electron transfer from ubiquinol to cytochrome c. Contributes to the generation of a proton gradient across the mitochondrial membrane that is then used for ATP synthesis.</text>
</comment>
<comment type="cofactor">
    <cofactor evidence="2">
        <name>heme b</name>
        <dbReference type="ChEBI" id="CHEBI:60344"/>
    </cofactor>
    <text evidence="2">Binds 2 heme b groups non-covalently.</text>
</comment>
<comment type="subunit">
    <text evidence="2">The cytochrome bc1 complex contains 11 subunits: 3 respiratory subunits (MT-CYB, CYC1 and UQCRFS1), 2 core proteins (UQCRC1 and UQCRC2) and 6 low-molecular weight proteins (UQCRH/QCR6, UQCRB/QCR7, UQCRQ/QCR8, UQCR10/QCR9, UQCR11/QCR10 and a cleavage product of UQCRFS1). This cytochrome bc1 complex then forms a dimer.</text>
</comment>
<comment type="subcellular location">
    <subcellularLocation>
        <location evidence="2">Mitochondrion inner membrane</location>
        <topology evidence="2">Multi-pass membrane protein</topology>
    </subcellularLocation>
</comment>
<comment type="miscellaneous">
    <text evidence="1">Heme 1 (or BL or b562) is low-potential and absorbs at about 562 nm, and heme 2 (or BH or b566) is high-potential and absorbs at about 566 nm.</text>
</comment>
<comment type="similarity">
    <text evidence="3 4">Belongs to the cytochrome b family.</text>
</comment>
<comment type="caution">
    <text evidence="2">The full-length protein contains only eight transmembrane helices, not nine as predicted by bioinformatics tools.</text>
</comment>
<keyword id="KW-0249">Electron transport</keyword>
<keyword id="KW-0349">Heme</keyword>
<keyword id="KW-0408">Iron</keyword>
<keyword id="KW-0472">Membrane</keyword>
<keyword id="KW-0479">Metal-binding</keyword>
<keyword id="KW-0496">Mitochondrion</keyword>
<keyword id="KW-0999">Mitochondrion inner membrane</keyword>
<keyword id="KW-0679">Respiratory chain</keyword>
<keyword id="KW-0812">Transmembrane</keyword>
<keyword id="KW-1133">Transmembrane helix</keyword>
<keyword id="KW-0813">Transport</keyword>
<keyword id="KW-0830">Ubiquinone</keyword>
<reference key="1">
    <citation type="submission" date="2005-06" db="EMBL/GenBank/DDBJ databases">
        <title>Phylogeny and biogeography of Eoglaucomys and Hylopetes (Rodentia: Sciuridae), inferred from molecular and morphometric analyses.</title>
        <authorList>
            <person name="Yu F."/>
            <person name="Pang J."/>
            <person name="Kilpatrick W.C."/>
            <person name="McGuire P.M."/>
            <person name="Wang Y."/>
            <person name="Woods C.A."/>
        </authorList>
    </citation>
    <scope>NUCLEOTIDE SEQUENCE [GENOMIC DNA]</scope>
    <source>
        <tissue>Skin</tissue>
    </source>
</reference>